<dbReference type="EC" id="1.16.3.1"/>
<dbReference type="EMBL" id="J02724">
    <property type="protein sequence ID" value="AAA49525.1"/>
    <property type="molecule type" value="mRNA"/>
</dbReference>
<dbReference type="PIR" id="C27805">
    <property type="entry name" value="C27805"/>
</dbReference>
<dbReference type="PDB" id="1MFR">
    <property type="method" value="X-ray"/>
    <property type="resolution" value="2.80 A"/>
    <property type="chains" value="A/B/C/D/E/F/G/H/I/J/K/L/M/N/O/P/Q/R/S/T/U/V/W/X=1-176"/>
</dbReference>
<dbReference type="PDB" id="3KA3">
    <property type="method" value="X-ray"/>
    <property type="resolution" value="1.40 A"/>
    <property type="chains" value="A=1-176"/>
</dbReference>
<dbReference type="PDB" id="3KA4">
    <property type="method" value="X-ray"/>
    <property type="resolution" value="1.40 A"/>
    <property type="chains" value="A=1-176"/>
</dbReference>
<dbReference type="PDB" id="3KA6">
    <property type="method" value="X-ray"/>
    <property type="resolution" value="1.40 A"/>
    <property type="chains" value="A=1-176"/>
</dbReference>
<dbReference type="PDB" id="3KA8">
    <property type="method" value="X-ray"/>
    <property type="resolution" value="1.35 A"/>
    <property type="chains" value="A=1-176"/>
</dbReference>
<dbReference type="PDB" id="3KA9">
    <property type="method" value="X-ray"/>
    <property type="resolution" value="1.45 A"/>
    <property type="chains" value="A=1-176"/>
</dbReference>
<dbReference type="PDB" id="3RBC">
    <property type="method" value="X-ray"/>
    <property type="resolution" value="2.70 A"/>
    <property type="chains" value="A/B/C/D/E/F/G/H/I/J/K/L/M/N/O/P/Q/R/S/T/U/V/W/X=1-176"/>
</dbReference>
<dbReference type="PDB" id="3RE7">
    <property type="method" value="X-ray"/>
    <property type="resolution" value="2.82 A"/>
    <property type="chains" value="A/B/C/D/E/F/G/H/I/J/K/L/M/N/O/P/Q/R/S/T/U/V/W/X=1-176"/>
</dbReference>
<dbReference type="PDB" id="3RGD">
    <property type="method" value="X-ray"/>
    <property type="resolution" value="2.89 A"/>
    <property type="chains" value="A/B/C/D/E/F/G/H/I/J/K/L/M/N/O/P/Q/R/S/T/U/V/W/X=1-176"/>
</dbReference>
<dbReference type="PDB" id="3SE1">
    <property type="method" value="X-ray"/>
    <property type="resolution" value="1.65 A"/>
    <property type="chains" value="A=1-176"/>
</dbReference>
<dbReference type="PDB" id="3SH6">
    <property type="method" value="X-ray"/>
    <property type="resolution" value="1.40 A"/>
    <property type="chains" value="A=1-176"/>
</dbReference>
<dbReference type="PDB" id="3SHX">
    <property type="method" value="X-ray"/>
    <property type="resolution" value="1.35 A"/>
    <property type="chains" value="A=1-176"/>
</dbReference>
<dbReference type="PDB" id="4DAS">
    <property type="method" value="X-ray"/>
    <property type="resolution" value="2.56 A"/>
    <property type="chains" value="A/B/C/D/E/F/G/H/I/J/K/L/M/N/O/P/Q/R/S/T/U/V/W/X=1-176"/>
</dbReference>
<dbReference type="PDB" id="4LPJ">
    <property type="method" value="X-ray"/>
    <property type="resolution" value="1.27 A"/>
    <property type="chains" value="A=1-176"/>
</dbReference>
<dbReference type="PDB" id="4LPM">
    <property type="method" value="X-ray"/>
    <property type="resolution" value="1.65 A"/>
    <property type="chains" value="A=2-175"/>
</dbReference>
<dbReference type="PDB" id="4LPN">
    <property type="method" value="X-ray"/>
    <property type="resolution" value="1.66 A"/>
    <property type="chains" value="A=1-176"/>
</dbReference>
<dbReference type="PDB" id="4LQH">
    <property type="method" value="X-ray"/>
    <property type="resolution" value="1.16 A"/>
    <property type="chains" value="A=1-176"/>
</dbReference>
<dbReference type="PDB" id="4LQJ">
    <property type="method" value="X-ray"/>
    <property type="resolution" value="1.20 A"/>
    <property type="chains" value="A=1-176"/>
</dbReference>
<dbReference type="PDB" id="4LQV">
    <property type="method" value="X-ray"/>
    <property type="resolution" value="1.54 A"/>
    <property type="chains" value="A=1-176"/>
</dbReference>
<dbReference type="PDB" id="4LYU">
    <property type="method" value="X-ray"/>
    <property type="resolution" value="1.75 A"/>
    <property type="chains" value="A=1-176"/>
</dbReference>
<dbReference type="PDB" id="4LYX">
    <property type="method" value="X-ray"/>
    <property type="resolution" value="1.23 A"/>
    <property type="chains" value="A=1-176"/>
</dbReference>
<dbReference type="PDB" id="4MJY">
    <property type="method" value="X-ray"/>
    <property type="resolution" value="1.40 A"/>
    <property type="chains" value="A=1-176"/>
</dbReference>
<dbReference type="PDB" id="4MKU">
    <property type="method" value="X-ray"/>
    <property type="resolution" value="1.30 A"/>
    <property type="chains" value="A=1-176"/>
</dbReference>
<dbReference type="PDB" id="4ML5">
    <property type="method" value="X-ray"/>
    <property type="resolution" value="1.22 A"/>
    <property type="chains" value="A=1-176"/>
</dbReference>
<dbReference type="PDB" id="4MN9">
    <property type="method" value="X-ray"/>
    <property type="resolution" value="1.15 A"/>
    <property type="chains" value="A=1-176"/>
</dbReference>
<dbReference type="PDB" id="4MY7">
    <property type="method" value="X-ray"/>
    <property type="resolution" value="1.48 A"/>
    <property type="chains" value="A=1-176"/>
</dbReference>
<dbReference type="PDB" id="4P18">
    <property type="method" value="X-ray"/>
    <property type="resolution" value="1.91 A"/>
    <property type="chains" value="A/B/C/D/E/F/G/H/I/J/K/L/M/N/O/P/Q/R/S/T/U/V/W/X=1-176"/>
</dbReference>
<dbReference type="PDB" id="5J8S">
    <property type="method" value="X-ray"/>
    <property type="resolution" value="1.50 A"/>
    <property type="chains" value="A=1-176"/>
</dbReference>
<dbReference type="PDB" id="5J8W">
    <property type="method" value="X-ray"/>
    <property type="resolution" value="1.11 A"/>
    <property type="chains" value="A=1-176"/>
</dbReference>
<dbReference type="PDB" id="5J93">
    <property type="method" value="X-ray"/>
    <property type="resolution" value="1.10 A"/>
    <property type="chains" value="A=1-176"/>
</dbReference>
<dbReference type="PDB" id="5J9V">
    <property type="method" value="X-ray"/>
    <property type="resolution" value="1.16 A"/>
    <property type="chains" value="A=1-176"/>
</dbReference>
<dbReference type="PDB" id="5JAC">
    <property type="method" value="X-ray"/>
    <property type="resolution" value="1.18 A"/>
    <property type="chains" value="A=1-176"/>
</dbReference>
<dbReference type="PDB" id="5XHI">
    <property type="method" value="X-ray"/>
    <property type="resolution" value="1.26 A"/>
    <property type="chains" value="A=2-175"/>
</dbReference>
<dbReference type="PDB" id="5XHM">
    <property type="method" value="X-ray"/>
    <property type="resolution" value="1.70 A"/>
    <property type="chains" value="A=2-175"/>
</dbReference>
<dbReference type="PDB" id="5XHN">
    <property type="method" value="X-ray"/>
    <property type="resolution" value="1.63 A"/>
    <property type="chains" value="A=2-175"/>
</dbReference>
<dbReference type="PDB" id="5XHO">
    <property type="method" value="X-ray"/>
    <property type="resolution" value="1.73 A"/>
    <property type="chains" value="A=2-175"/>
</dbReference>
<dbReference type="PDB" id="6I36">
    <property type="method" value="X-ray"/>
    <property type="resolution" value="1.59 A"/>
    <property type="chains" value="A=1-176"/>
</dbReference>
<dbReference type="PDB" id="6I9P">
    <property type="method" value="X-ray"/>
    <property type="resolution" value="1.25 A"/>
    <property type="chains" value="A=1-176"/>
</dbReference>
<dbReference type="PDB" id="6I9T">
    <property type="method" value="X-ray"/>
    <property type="resolution" value="1.20 A"/>
    <property type="chains" value="A=1-176"/>
</dbReference>
<dbReference type="PDB" id="6IAF">
    <property type="method" value="X-ray"/>
    <property type="resolution" value="1.35 A"/>
    <property type="chains" value="A=1-176"/>
</dbReference>
<dbReference type="PDB" id="6IAJ">
    <property type="method" value="X-ray"/>
    <property type="resolution" value="1.62 A"/>
    <property type="chains" value="A=1-176"/>
</dbReference>
<dbReference type="PDBsum" id="1MFR"/>
<dbReference type="PDBsum" id="3KA3"/>
<dbReference type="PDBsum" id="3KA4"/>
<dbReference type="PDBsum" id="3KA6"/>
<dbReference type="PDBsum" id="3KA8"/>
<dbReference type="PDBsum" id="3KA9"/>
<dbReference type="PDBsum" id="3RBC"/>
<dbReference type="PDBsum" id="3RE7"/>
<dbReference type="PDBsum" id="3RGD"/>
<dbReference type="PDBsum" id="3SE1"/>
<dbReference type="PDBsum" id="3SH6"/>
<dbReference type="PDBsum" id="3SHX"/>
<dbReference type="PDBsum" id="4DAS"/>
<dbReference type="PDBsum" id="4LPJ"/>
<dbReference type="PDBsum" id="4LPM"/>
<dbReference type="PDBsum" id="4LPN"/>
<dbReference type="PDBsum" id="4LQH"/>
<dbReference type="PDBsum" id="4LQJ"/>
<dbReference type="PDBsum" id="4LQV"/>
<dbReference type="PDBsum" id="4LYU"/>
<dbReference type="PDBsum" id="4LYX"/>
<dbReference type="PDBsum" id="4MJY"/>
<dbReference type="PDBsum" id="4MKU"/>
<dbReference type="PDBsum" id="4ML5"/>
<dbReference type="PDBsum" id="4MN9"/>
<dbReference type="PDBsum" id="4MY7"/>
<dbReference type="PDBsum" id="4P18"/>
<dbReference type="PDBsum" id="5J8S"/>
<dbReference type="PDBsum" id="5J8W"/>
<dbReference type="PDBsum" id="5J93"/>
<dbReference type="PDBsum" id="5J9V"/>
<dbReference type="PDBsum" id="5JAC"/>
<dbReference type="PDBsum" id="5XHI"/>
<dbReference type="PDBsum" id="5XHM"/>
<dbReference type="PDBsum" id="5XHN"/>
<dbReference type="PDBsum" id="5XHO"/>
<dbReference type="PDBsum" id="6I36"/>
<dbReference type="PDBsum" id="6I9P"/>
<dbReference type="PDBsum" id="6I9T"/>
<dbReference type="PDBsum" id="6IAF"/>
<dbReference type="PDBsum" id="6IAJ"/>
<dbReference type="SMR" id="P07798"/>
<dbReference type="BRENDA" id="1.16.3.1">
    <property type="organism ID" value="5278"/>
</dbReference>
<dbReference type="SABIO-RK" id="P07798"/>
<dbReference type="EvolutionaryTrace" id="P07798"/>
<dbReference type="GO" id="GO:0005737">
    <property type="term" value="C:cytoplasm"/>
    <property type="evidence" value="ECO:0007669"/>
    <property type="project" value="TreeGrafter"/>
</dbReference>
<dbReference type="GO" id="GO:0008199">
    <property type="term" value="F:ferric iron binding"/>
    <property type="evidence" value="ECO:0007669"/>
    <property type="project" value="InterPro"/>
</dbReference>
<dbReference type="GO" id="GO:0008198">
    <property type="term" value="F:ferrous iron binding"/>
    <property type="evidence" value="ECO:0007669"/>
    <property type="project" value="TreeGrafter"/>
</dbReference>
<dbReference type="GO" id="GO:0004322">
    <property type="term" value="F:ferroxidase activity"/>
    <property type="evidence" value="ECO:0007669"/>
    <property type="project" value="UniProtKB-EC"/>
</dbReference>
<dbReference type="GO" id="GO:0006879">
    <property type="term" value="P:intracellular iron ion homeostasis"/>
    <property type="evidence" value="ECO:0007669"/>
    <property type="project" value="UniProtKB-KW"/>
</dbReference>
<dbReference type="GO" id="GO:0006826">
    <property type="term" value="P:iron ion transport"/>
    <property type="evidence" value="ECO:0007669"/>
    <property type="project" value="InterPro"/>
</dbReference>
<dbReference type="CDD" id="cd00904">
    <property type="entry name" value="Ferritin"/>
    <property type="match status" value="1"/>
</dbReference>
<dbReference type="FunFam" id="1.20.1260.10:FF:000002">
    <property type="entry name" value="Ferritin, mitochondrial"/>
    <property type="match status" value="1"/>
</dbReference>
<dbReference type="Gene3D" id="1.20.1260.10">
    <property type="match status" value="1"/>
</dbReference>
<dbReference type="InterPro" id="IPR001519">
    <property type="entry name" value="Ferritin"/>
</dbReference>
<dbReference type="InterPro" id="IPR012347">
    <property type="entry name" value="Ferritin-like"/>
</dbReference>
<dbReference type="InterPro" id="IPR009040">
    <property type="entry name" value="Ferritin-like_diiron"/>
</dbReference>
<dbReference type="InterPro" id="IPR009078">
    <property type="entry name" value="Ferritin-like_SF"/>
</dbReference>
<dbReference type="InterPro" id="IPR014034">
    <property type="entry name" value="Ferritin_CS"/>
</dbReference>
<dbReference type="InterPro" id="IPR008331">
    <property type="entry name" value="Ferritin_DPS_dom"/>
</dbReference>
<dbReference type="PANTHER" id="PTHR11431">
    <property type="entry name" value="FERRITIN"/>
    <property type="match status" value="1"/>
</dbReference>
<dbReference type="PANTHER" id="PTHR11431:SF54">
    <property type="entry name" value="FERRITIN"/>
    <property type="match status" value="1"/>
</dbReference>
<dbReference type="Pfam" id="PF00210">
    <property type="entry name" value="Ferritin"/>
    <property type="match status" value="1"/>
</dbReference>
<dbReference type="SUPFAM" id="SSF47240">
    <property type="entry name" value="Ferritin-like"/>
    <property type="match status" value="1"/>
</dbReference>
<dbReference type="PROSITE" id="PS00540">
    <property type="entry name" value="FERRITIN_1"/>
    <property type="match status" value="1"/>
</dbReference>
<dbReference type="PROSITE" id="PS00204">
    <property type="entry name" value="FERRITIN_2"/>
    <property type="match status" value="1"/>
</dbReference>
<dbReference type="PROSITE" id="PS50905">
    <property type="entry name" value="FERRITIN_LIKE"/>
    <property type="match status" value="1"/>
</dbReference>
<proteinExistence type="evidence at protein level"/>
<keyword id="KW-0002">3D-structure</keyword>
<keyword id="KW-0408">Iron</keyword>
<keyword id="KW-0409">Iron storage</keyword>
<keyword id="KW-0479">Metal-binding</keyword>
<keyword id="KW-0560">Oxidoreductase</keyword>
<name>FRI2_AQUCT</name>
<feature type="initiator methionine" description="Removed" evidence="1">
    <location>
        <position position="1"/>
    </location>
</feature>
<feature type="chain" id="PRO_0000201073" description="Ferritin, middle subunit">
    <location>
        <begin position="2"/>
        <end position="176"/>
    </location>
</feature>
<feature type="domain" description="Ferritin-like diiron" evidence="2">
    <location>
        <begin position="7"/>
        <end position="156"/>
    </location>
</feature>
<feature type="binding site">
    <location>
        <position position="24"/>
    </location>
    <ligand>
        <name>Fe cation</name>
        <dbReference type="ChEBI" id="CHEBI:24875"/>
        <label>1</label>
    </ligand>
</feature>
<feature type="binding site">
    <location>
        <position position="59"/>
    </location>
    <ligand>
        <name>Fe cation</name>
        <dbReference type="ChEBI" id="CHEBI:24875"/>
        <label>1</label>
    </ligand>
</feature>
<feature type="binding site">
    <location>
        <position position="59"/>
    </location>
    <ligand>
        <name>Fe cation</name>
        <dbReference type="ChEBI" id="CHEBI:24875"/>
        <label>2</label>
    </ligand>
</feature>
<feature type="binding site">
    <location>
        <position position="62"/>
    </location>
    <ligand>
        <name>Fe cation</name>
        <dbReference type="ChEBI" id="CHEBI:24875"/>
        <label>1</label>
    </ligand>
</feature>
<feature type="binding site">
    <location>
        <position position="104"/>
    </location>
    <ligand>
        <name>Fe cation</name>
        <dbReference type="ChEBI" id="CHEBI:24875"/>
        <label>2</label>
    </ligand>
</feature>
<feature type="binding site">
    <location>
        <position position="138"/>
    </location>
    <ligand>
        <name>Fe cation</name>
        <dbReference type="ChEBI" id="CHEBI:24875"/>
        <label>2</label>
    </ligand>
</feature>
<feature type="binding site">
    <location>
        <position position="141"/>
    </location>
    <ligand>
        <name>Fe cation</name>
        <dbReference type="ChEBI" id="CHEBI:24875"/>
        <label>2</label>
    </ligand>
</feature>
<feature type="helix" evidence="4">
    <location>
        <begin position="11"/>
        <end position="38"/>
    </location>
</feature>
<feature type="turn" evidence="4">
    <location>
        <begin position="41"/>
        <end position="43"/>
    </location>
</feature>
<feature type="helix" evidence="4">
    <location>
        <begin position="46"/>
        <end position="73"/>
    </location>
</feature>
<feature type="helix" evidence="4">
    <location>
        <begin position="93"/>
        <end position="120"/>
    </location>
</feature>
<feature type="helix" evidence="4">
    <location>
        <begin position="124"/>
        <end position="133"/>
    </location>
</feature>
<feature type="helix" evidence="4">
    <location>
        <begin position="135"/>
        <end position="154"/>
    </location>
</feature>
<feature type="turn" evidence="4">
    <location>
        <begin position="155"/>
        <end position="159"/>
    </location>
</feature>
<feature type="helix" evidence="4">
    <location>
        <begin position="161"/>
        <end position="170"/>
    </location>
</feature>
<evidence type="ECO:0000250" key="1"/>
<evidence type="ECO:0000255" key="2">
    <source>
        <dbReference type="PROSITE-ProRule" id="PRU00085"/>
    </source>
</evidence>
<evidence type="ECO:0000305" key="3"/>
<evidence type="ECO:0007829" key="4">
    <source>
        <dbReference type="PDB" id="5J93"/>
    </source>
</evidence>
<comment type="function">
    <text>Stores iron in a soluble, non-toxic, readily available form. Important for iron homeostasis. Has ferroxidase activity. Iron is taken up in the ferrous form and deposited as ferric hydroxides after oxidation.</text>
</comment>
<comment type="catalytic activity">
    <reaction>
        <text>4 Fe(2+) + O2 + 4 H(+) = 4 Fe(3+) + 2 H2O</text>
        <dbReference type="Rhea" id="RHEA:11148"/>
        <dbReference type="ChEBI" id="CHEBI:15377"/>
        <dbReference type="ChEBI" id="CHEBI:15378"/>
        <dbReference type="ChEBI" id="CHEBI:15379"/>
        <dbReference type="ChEBI" id="CHEBI:29033"/>
        <dbReference type="ChEBI" id="CHEBI:29034"/>
        <dbReference type="EC" id="1.16.3.1"/>
    </reaction>
</comment>
<comment type="subunit">
    <text>Oligomer of 24 subunits. The functional molecule is roughly spherical and contains a central cavity into which the polymeric mineral iron core is deposited.</text>
</comment>
<comment type="miscellaneous">
    <text>There are three types of ferritin subunits in amphibia: L, M and H chains. M and H chains are fast mineralizing; the L chain is very slow mineralizing.</text>
</comment>
<comment type="similarity">
    <text evidence="3">Belongs to the ferritin family.</text>
</comment>
<protein>
    <recommendedName>
        <fullName>Ferritin, middle subunit</fullName>
        <shortName>Ferritin M</shortName>
        <ecNumber>1.16.3.1</ecNumber>
    </recommendedName>
    <alternativeName>
        <fullName>Ferritin H'</fullName>
    </alternativeName>
    <alternativeName>
        <fullName>Ferritin X</fullName>
    </alternativeName>
</protein>
<reference key="1">
    <citation type="journal article" date="1987" name="J. Biol. Chem.">
        <title>Differences in the regulation of messenger RNA for housekeeping and specialized-cell ferritin. A comparison of three distinct ferritin complementary DNAs, the corresponding subunits, and identification of the first processed in amphibia.</title>
        <authorList>
            <person name="Dickey L.F."/>
            <person name="Sreedharan S."/>
            <person name="Theil E.C."/>
            <person name="Didsbury J.R."/>
            <person name="Wang Y.-H."/>
            <person name="Kaufman R.E."/>
        </authorList>
    </citation>
    <scope>NUCLEOTIDE SEQUENCE [MRNA]</scope>
</reference>
<reference key="2">
    <citation type="journal article" date="1999" name="J. Biol. Inorg. Chem.">
        <title>Crystal structure of bullfrog M ferritin at 2.8 A resolution: analysis of subunit interactions and the binuclear metal center.</title>
        <authorList>
            <person name="Ha Y."/>
            <person name="Shi D."/>
            <person name="Small G.W."/>
            <person name="Theil E.C."/>
            <person name="Allewell N.M."/>
        </authorList>
    </citation>
    <scope>X-RAY CRYSTALLOGRAPHY (2.8 ANGSTROMS)</scope>
</reference>
<sequence>MVSQVRQNYHSDCEAAVNRMLNLELYASYTYSSMYAFFDRDDVALHNVAEFFKEHSHEEREHAEKFMKYQNKRGGRVVLQDIKKPERDEWGNTLEAMQAALQLEKTVNQALLDLHKLATDKVDPHLCDFLESEYLEEQVKDIKRIGDFITNLKRLGLPENGMGEYLFDKHSVKESS</sequence>
<accession>P07798</accession>
<organism>
    <name type="scientific">Aquarana catesbeiana</name>
    <name type="common">American bullfrog</name>
    <name type="synonym">Rana catesbeiana</name>
    <dbReference type="NCBI Taxonomy" id="8400"/>
    <lineage>
        <taxon>Eukaryota</taxon>
        <taxon>Metazoa</taxon>
        <taxon>Chordata</taxon>
        <taxon>Craniata</taxon>
        <taxon>Vertebrata</taxon>
        <taxon>Euteleostomi</taxon>
        <taxon>Amphibia</taxon>
        <taxon>Batrachia</taxon>
        <taxon>Anura</taxon>
        <taxon>Neobatrachia</taxon>
        <taxon>Ranoidea</taxon>
        <taxon>Ranidae</taxon>
        <taxon>Aquarana</taxon>
    </lineage>
</organism>